<accession>Q89777</accession>
<feature type="chain" id="PRO_0000373332" description="Protein MGF 505-5R">
    <location>
        <begin position="1"/>
        <end position="498"/>
    </location>
</feature>
<reference key="1">
    <citation type="journal article" date="1995" name="Virology">
        <title>Analysis of the complete nucleotide sequence of African swine fever virus.</title>
        <authorList>
            <person name="Yanez R.J."/>
            <person name="Rodriguez J.M."/>
            <person name="Nogal M.L."/>
            <person name="Yuste L."/>
            <person name="Enriquez C."/>
            <person name="Rodriguez J.F."/>
            <person name="Vinuela E."/>
        </authorList>
    </citation>
    <scope>NUCLEOTIDE SEQUENCE [LARGE SCALE GENOMIC DNA]</scope>
</reference>
<reference key="2">
    <citation type="journal article" date="2001" name="J. Virol.">
        <title>African swine fever virus multigene family 360 and 530 genes are novel macrophage host range determinants.</title>
        <authorList>
            <person name="Zsak L."/>
            <person name="Lu Z."/>
            <person name="Burrage T.G."/>
            <person name="Neilan J.G."/>
            <person name="Kutish G.F."/>
            <person name="Moore D.M."/>
            <person name="Rock D.L."/>
        </authorList>
    </citation>
    <scope>FUNCTION</scope>
</reference>
<reference key="3">
    <citation type="journal article" date="2020" name="J. Virol.">
        <title>The African Swine Fever Virus Transcriptome.</title>
        <authorList>
            <person name="Cackett G."/>
            <person name="Matelska D."/>
            <person name="Sykora M."/>
            <person name="Portugal R."/>
            <person name="Malecki M."/>
            <person name="Baehler J."/>
            <person name="Dixon L."/>
            <person name="Werner F."/>
        </authorList>
    </citation>
    <scope>INDUCTION</scope>
</reference>
<organism>
    <name type="scientific">African swine fever virus (strain Badajoz 1971 Vero-adapted)</name>
    <name type="common">Ba71V</name>
    <name type="synonym">ASFV</name>
    <dbReference type="NCBI Taxonomy" id="10498"/>
    <lineage>
        <taxon>Viruses</taxon>
        <taxon>Varidnaviria</taxon>
        <taxon>Bamfordvirae</taxon>
        <taxon>Nucleocytoviricota</taxon>
        <taxon>Pokkesviricetes</taxon>
        <taxon>Asfuvirales</taxon>
        <taxon>Asfarviridae</taxon>
        <taxon>Asfivirus</taxon>
        <taxon>African swine fever virus</taxon>
    </lineage>
</organism>
<comment type="function">
    <text evidence="1">Plays a role in virus cell tropism, and may be required for efficient virus replication in macrophages.</text>
</comment>
<comment type="induction">
    <text evidence="2">Expressed in the early phase of the viral replicative cycle.</text>
</comment>
<comment type="similarity">
    <text evidence="3">Belongs to the asfivirus MGF 505 family.</text>
</comment>
<protein>
    <recommendedName>
        <fullName>Protein MGF 505-5R</fullName>
    </recommendedName>
</protein>
<proteinExistence type="evidence at transcript level"/>
<keyword id="KW-0244">Early protein</keyword>
<keyword id="KW-1185">Reference proteome</keyword>
<dbReference type="EMBL" id="U02468">
    <property type="protein sequence ID" value="AAA17788.1"/>
    <property type="molecule type" value="Genomic_DNA"/>
</dbReference>
<dbReference type="EMBL" id="U18466">
    <property type="protein sequence ID" value="AAA65259.1"/>
    <property type="molecule type" value="Genomic_DNA"/>
</dbReference>
<dbReference type="RefSeq" id="NP_042723.1">
    <property type="nucleotide sequence ID" value="NC_001659.2"/>
</dbReference>
<dbReference type="SMR" id="Q89777"/>
<dbReference type="GeneID" id="22220411"/>
<dbReference type="KEGG" id="vg:22220411"/>
<dbReference type="Proteomes" id="UP000000624">
    <property type="component" value="Segment"/>
</dbReference>
<dbReference type="InterPro" id="IPR004858">
    <property type="entry name" value="MGF_505"/>
</dbReference>
<dbReference type="Pfam" id="PF03158">
    <property type="entry name" value="DUF249"/>
    <property type="match status" value="1"/>
</dbReference>
<gene>
    <name type="ordered locus">BA71R-028</name>
    <name type="ORF">A498R</name>
</gene>
<sequence>MFSLQEICRKNIYFLPDWLSEHVIQRLGLYWEKHGSLQRIGDDYVLIQQDLIIPINEALRMAGEEGNDEVVQLLLLWEGNIHYAIIGALESDHYSLIRKLYDQIEDCHDILPLIQDPKIFEKCHELDKFCNILCLVLHAVKNDMLCILQEYKMHLSGEDIQVVFETACRSQKNDIVSWMGQNIAIYNSGVIFDIAFDKMNVSLLSIGYTLLFNHHINNTNENINSLLTQHLEWAAGMGLLHFMLETLKYGGDVTIIVLSEAVKYDHRKILDYFLRRKNLYQEDLEELLLLAIRADCSKKTLNLLLSYLNYSINNIRKKILQCVKEYETTVIIKILWKRKINLIEPILADFIGYHSYTYMVDFMREFSIHPEKMIKMAARESREDLIIKFSKKVCKEPKDRLHYLKSLVYTMRHKEGKQLLIYTIHNLYKACHLESKEMFNLARFYARHNAVIQFKSICHDLSKLNINIKNLLLECLGIAIKKNYFQLIKTIETDMRYE</sequence>
<organismHost>
    <name type="scientific">Ornithodoros</name>
    <name type="common">relapsing fever ticks</name>
    <dbReference type="NCBI Taxonomy" id="6937"/>
</organismHost>
<organismHost>
    <name type="scientific">Sus scrofa</name>
    <name type="common">Pig</name>
    <dbReference type="NCBI Taxonomy" id="9823"/>
</organismHost>
<name>5055R_ASFB7</name>
<evidence type="ECO:0000269" key="1">
    <source>
    </source>
</evidence>
<evidence type="ECO:0000269" key="2">
    <source>
    </source>
</evidence>
<evidence type="ECO:0000305" key="3"/>